<reference key="1">
    <citation type="journal article" date="2006" name="J. Bacteriol.">
        <title>Complete genome sequence of the dehalorespiring bacterium Desulfitobacterium hafniense Y51 and comparison with Dehalococcoides ethenogenes 195.</title>
        <authorList>
            <person name="Nonaka H."/>
            <person name="Keresztes G."/>
            <person name="Shinoda Y."/>
            <person name="Ikenaga Y."/>
            <person name="Abe M."/>
            <person name="Naito K."/>
            <person name="Inatomi K."/>
            <person name="Furukawa K."/>
            <person name="Inui M."/>
            <person name="Yukawa H."/>
        </authorList>
    </citation>
    <scope>NUCLEOTIDE SEQUENCE [LARGE SCALE GENOMIC DNA]</scope>
    <source>
        <strain>Y51</strain>
    </source>
</reference>
<feature type="chain" id="PRO_0000366311" description="UPF0735 ACT domain-containing protein DSY2247">
    <location>
        <begin position="1"/>
        <end position="150"/>
    </location>
</feature>
<feature type="domain" description="ACT" evidence="1">
    <location>
        <begin position="74"/>
        <end position="149"/>
    </location>
</feature>
<name>Y2247_DESHY</name>
<comment type="similarity">
    <text evidence="1">Belongs to the UPF0735 family.</text>
</comment>
<proteinExistence type="inferred from homology"/>
<sequence length="150" mass="16424">MAGQNRNKDFLIVSKDILPEAILKTAQAKELLVKGDANTINEAVDRVQLSRSAFYKYKDGVFPFYEASREKIITFSLTLENTAGVLSNVLNTIARFKANVLTINQGIPLQGIANVTISVENMGMVDIPENLLSALGEIDGVRKIEVIGQN</sequence>
<accession>Q24VA6</accession>
<organism>
    <name type="scientific">Desulfitobacterium hafniense (strain Y51)</name>
    <dbReference type="NCBI Taxonomy" id="138119"/>
    <lineage>
        <taxon>Bacteria</taxon>
        <taxon>Bacillati</taxon>
        <taxon>Bacillota</taxon>
        <taxon>Clostridia</taxon>
        <taxon>Eubacteriales</taxon>
        <taxon>Desulfitobacteriaceae</taxon>
        <taxon>Desulfitobacterium</taxon>
    </lineage>
</organism>
<keyword id="KW-1185">Reference proteome</keyword>
<dbReference type="EMBL" id="AP008230">
    <property type="protein sequence ID" value="BAE84036.1"/>
    <property type="molecule type" value="Genomic_DNA"/>
</dbReference>
<dbReference type="RefSeq" id="WP_005811150.1">
    <property type="nucleotide sequence ID" value="NC_007907.1"/>
</dbReference>
<dbReference type="STRING" id="138119.DSY2247"/>
<dbReference type="KEGG" id="dsy:DSY2247"/>
<dbReference type="eggNOG" id="COG4492">
    <property type="taxonomic scope" value="Bacteria"/>
</dbReference>
<dbReference type="HOGENOM" id="CLU_128147_0_0_9"/>
<dbReference type="Proteomes" id="UP000001946">
    <property type="component" value="Chromosome"/>
</dbReference>
<dbReference type="CDD" id="cd04888">
    <property type="entry name" value="ACT_PheB-BS"/>
    <property type="match status" value="1"/>
</dbReference>
<dbReference type="HAMAP" id="MF_00707">
    <property type="entry name" value="UPF0735"/>
    <property type="match status" value="1"/>
</dbReference>
<dbReference type="InterPro" id="IPR045865">
    <property type="entry name" value="ACT-like_dom_sf"/>
</dbReference>
<dbReference type="InterPro" id="IPR002912">
    <property type="entry name" value="ACT_dom"/>
</dbReference>
<dbReference type="InterPro" id="IPR008310">
    <property type="entry name" value="UPF0735_ACT_dom-cont"/>
</dbReference>
<dbReference type="NCBIfam" id="NF003361">
    <property type="entry name" value="PRK04435.1"/>
    <property type="match status" value="1"/>
</dbReference>
<dbReference type="PIRSF" id="PIRSF025624">
    <property type="entry name" value="ACT_PheB"/>
    <property type="match status" value="1"/>
</dbReference>
<dbReference type="SUPFAM" id="SSF55021">
    <property type="entry name" value="ACT-like"/>
    <property type="match status" value="1"/>
</dbReference>
<dbReference type="PROSITE" id="PS51671">
    <property type="entry name" value="ACT"/>
    <property type="match status" value="1"/>
</dbReference>
<protein>
    <recommendedName>
        <fullName evidence="1">UPF0735 ACT domain-containing protein DSY2247</fullName>
    </recommendedName>
</protein>
<gene>
    <name type="ordered locus">DSY2247</name>
</gene>
<evidence type="ECO:0000255" key="1">
    <source>
        <dbReference type="HAMAP-Rule" id="MF_00707"/>
    </source>
</evidence>